<feature type="chain" id="PRO_1000138010" description="N-succinylarginine dihydrolase">
    <location>
        <begin position="1"/>
        <end position="447"/>
    </location>
</feature>
<feature type="active site" evidence="1">
    <location>
        <position position="174"/>
    </location>
</feature>
<feature type="active site" evidence="1">
    <location>
        <position position="248"/>
    </location>
</feature>
<feature type="active site" description="Nucleophile" evidence="1">
    <location>
        <position position="365"/>
    </location>
</feature>
<feature type="binding site" evidence="1">
    <location>
        <begin position="19"/>
        <end position="28"/>
    </location>
    <ligand>
        <name>substrate</name>
    </ligand>
</feature>
<feature type="binding site" evidence="1">
    <location>
        <position position="110"/>
    </location>
    <ligand>
        <name>substrate</name>
    </ligand>
</feature>
<feature type="binding site" evidence="1">
    <location>
        <begin position="137"/>
        <end position="138"/>
    </location>
    <ligand>
        <name>substrate</name>
    </ligand>
</feature>
<feature type="binding site" evidence="1">
    <location>
        <position position="212"/>
    </location>
    <ligand>
        <name>substrate</name>
    </ligand>
</feature>
<feature type="binding site" evidence="1">
    <location>
        <position position="250"/>
    </location>
    <ligand>
        <name>substrate</name>
    </ligand>
</feature>
<feature type="binding site" evidence="1">
    <location>
        <position position="359"/>
    </location>
    <ligand>
        <name>substrate</name>
    </ligand>
</feature>
<dbReference type="EC" id="3.5.3.23" evidence="1"/>
<dbReference type="EMBL" id="CP001164">
    <property type="protein sequence ID" value="ACI36401.1"/>
    <property type="molecule type" value="Genomic_DNA"/>
</dbReference>
<dbReference type="RefSeq" id="WP_000995025.1">
    <property type="nucleotide sequence ID" value="NC_011353.1"/>
</dbReference>
<dbReference type="SMR" id="B5YQ32"/>
<dbReference type="KEGG" id="ecf:ECH74115_2463"/>
<dbReference type="HOGENOM" id="CLU_053835_0_0_6"/>
<dbReference type="UniPathway" id="UPA00185">
    <property type="reaction ID" value="UER00280"/>
</dbReference>
<dbReference type="GO" id="GO:0009015">
    <property type="term" value="F:N-succinylarginine dihydrolase activity"/>
    <property type="evidence" value="ECO:0007669"/>
    <property type="project" value="UniProtKB-UniRule"/>
</dbReference>
<dbReference type="GO" id="GO:0019544">
    <property type="term" value="P:arginine catabolic process to glutamate"/>
    <property type="evidence" value="ECO:0007669"/>
    <property type="project" value="UniProtKB-UniRule"/>
</dbReference>
<dbReference type="GO" id="GO:0019545">
    <property type="term" value="P:arginine catabolic process to succinate"/>
    <property type="evidence" value="ECO:0007669"/>
    <property type="project" value="UniProtKB-UniRule"/>
</dbReference>
<dbReference type="FunFam" id="3.75.10.20:FF:000001">
    <property type="entry name" value="N-succinylarginine dihydrolase"/>
    <property type="match status" value="1"/>
</dbReference>
<dbReference type="Gene3D" id="3.75.10.20">
    <property type="entry name" value="Succinylarginine dihydrolase"/>
    <property type="match status" value="1"/>
</dbReference>
<dbReference type="HAMAP" id="MF_01172">
    <property type="entry name" value="AstB"/>
    <property type="match status" value="1"/>
</dbReference>
<dbReference type="InterPro" id="IPR037031">
    <property type="entry name" value="AstB_sf"/>
</dbReference>
<dbReference type="InterPro" id="IPR007079">
    <property type="entry name" value="SuccinylArg_d-Hdrlase_AstB"/>
</dbReference>
<dbReference type="NCBIfam" id="TIGR03241">
    <property type="entry name" value="arg_catab_astB"/>
    <property type="match status" value="1"/>
</dbReference>
<dbReference type="NCBIfam" id="NF009789">
    <property type="entry name" value="PRK13281.1"/>
    <property type="match status" value="1"/>
</dbReference>
<dbReference type="PANTHER" id="PTHR30420">
    <property type="entry name" value="N-SUCCINYLARGININE DIHYDROLASE"/>
    <property type="match status" value="1"/>
</dbReference>
<dbReference type="PANTHER" id="PTHR30420:SF2">
    <property type="entry name" value="N-SUCCINYLARGININE DIHYDROLASE"/>
    <property type="match status" value="1"/>
</dbReference>
<dbReference type="Pfam" id="PF04996">
    <property type="entry name" value="AstB"/>
    <property type="match status" value="1"/>
</dbReference>
<dbReference type="SUPFAM" id="SSF55909">
    <property type="entry name" value="Pentein"/>
    <property type="match status" value="1"/>
</dbReference>
<comment type="function">
    <text evidence="1">Catalyzes the hydrolysis of N(2)-succinylarginine into N(2)-succinylornithine, ammonia and CO(2).</text>
</comment>
<comment type="catalytic activity">
    <reaction evidence="1">
        <text>N(2)-succinyl-L-arginine + 2 H2O + 2 H(+) = N(2)-succinyl-L-ornithine + 2 NH4(+) + CO2</text>
        <dbReference type="Rhea" id="RHEA:19533"/>
        <dbReference type="ChEBI" id="CHEBI:15377"/>
        <dbReference type="ChEBI" id="CHEBI:15378"/>
        <dbReference type="ChEBI" id="CHEBI:16526"/>
        <dbReference type="ChEBI" id="CHEBI:28938"/>
        <dbReference type="ChEBI" id="CHEBI:58241"/>
        <dbReference type="ChEBI" id="CHEBI:58514"/>
        <dbReference type="EC" id="3.5.3.23"/>
    </reaction>
</comment>
<comment type="pathway">
    <text evidence="1">Amino-acid degradation; L-arginine degradation via AST pathway; L-glutamate and succinate from L-arginine: step 2/5.</text>
</comment>
<comment type="subunit">
    <text evidence="1">Homodimer.</text>
</comment>
<comment type="similarity">
    <text evidence="1">Belongs to the succinylarginine dihydrolase family.</text>
</comment>
<name>ASTB_ECO5E</name>
<accession>B5YQ32</accession>
<sequence>MNAWEVNFDGLVGLTHHYAGLSFGNKASTRHRFQVSNPRLAAKQGLLKMKTLADAGFPQAVIPPHERPFIPVLRQLGFSGSDEQVLEKVVRQAPHWLSSVSSASPMWVANAATIAPSADTLDGKVHLTVANLNNKFHRSLEAPVTESLLKAIFNDEEKFSVHSALPQVALLGDEGAANHNRLGGHYGEPGMQLFVYGREEGNDTRPSRYPARQTREASEAVARLNQVNPQQVIFAQQNPDVIDQGVFHNDVIAVSNRQVLFCHQQAFARQSQLLANLRARVNGFMAIEVPATQVSVSDAVSTYLFNSQLLSRDDGSMMLVLPQECREHAGVWGYLNELLAADNPISELKVFDLRESMANGGGPACLRLRVVLTQEERRAVNPAVMMNDTLFNALNDWVDRYYRDRLTAADLADPQLLREGREALDVLSQLLNLGSVYPFQREGGGNG</sequence>
<proteinExistence type="inferred from homology"/>
<gene>
    <name evidence="1" type="primary">astB</name>
    <name type="ordered locus">ECH74115_2463</name>
</gene>
<protein>
    <recommendedName>
        <fullName evidence="1">N-succinylarginine dihydrolase</fullName>
        <ecNumber evidence="1">3.5.3.23</ecNumber>
    </recommendedName>
</protein>
<evidence type="ECO:0000255" key="1">
    <source>
        <dbReference type="HAMAP-Rule" id="MF_01172"/>
    </source>
</evidence>
<reference key="1">
    <citation type="journal article" date="2011" name="Proc. Natl. Acad. Sci. U.S.A.">
        <title>Genomic anatomy of Escherichia coli O157:H7 outbreaks.</title>
        <authorList>
            <person name="Eppinger M."/>
            <person name="Mammel M.K."/>
            <person name="Leclerc J.E."/>
            <person name="Ravel J."/>
            <person name="Cebula T.A."/>
        </authorList>
    </citation>
    <scope>NUCLEOTIDE SEQUENCE [LARGE SCALE GENOMIC DNA]</scope>
    <source>
        <strain>EC4115 / EHEC</strain>
    </source>
</reference>
<keyword id="KW-0056">Arginine metabolism</keyword>
<keyword id="KW-0378">Hydrolase</keyword>
<organism>
    <name type="scientific">Escherichia coli O157:H7 (strain EC4115 / EHEC)</name>
    <dbReference type="NCBI Taxonomy" id="444450"/>
    <lineage>
        <taxon>Bacteria</taxon>
        <taxon>Pseudomonadati</taxon>
        <taxon>Pseudomonadota</taxon>
        <taxon>Gammaproteobacteria</taxon>
        <taxon>Enterobacterales</taxon>
        <taxon>Enterobacteriaceae</taxon>
        <taxon>Escherichia</taxon>
    </lineage>
</organism>